<evidence type="ECO:0000255" key="1">
    <source>
        <dbReference type="HAMAP-Rule" id="MF_00214"/>
    </source>
</evidence>
<dbReference type="EC" id="4.2.1.10" evidence="1"/>
<dbReference type="EMBL" id="CP001033">
    <property type="protein sequence ID" value="ACB90619.1"/>
    <property type="molecule type" value="Genomic_DNA"/>
</dbReference>
<dbReference type="RefSeq" id="WP_000767762.1">
    <property type="nucleotide sequence ID" value="NC_010582.1"/>
</dbReference>
<dbReference type="SMR" id="B2IQJ5"/>
<dbReference type="GeneID" id="45653363"/>
<dbReference type="KEGG" id="spw:SPCG_1367"/>
<dbReference type="HOGENOM" id="CLU_064444_0_0_9"/>
<dbReference type="UniPathway" id="UPA00053">
    <property type="reaction ID" value="UER00086"/>
</dbReference>
<dbReference type="GO" id="GO:0003855">
    <property type="term" value="F:3-dehydroquinate dehydratase activity"/>
    <property type="evidence" value="ECO:0007669"/>
    <property type="project" value="UniProtKB-UniRule"/>
</dbReference>
<dbReference type="GO" id="GO:0046279">
    <property type="term" value="P:3,4-dihydroxybenzoate biosynthetic process"/>
    <property type="evidence" value="ECO:0007669"/>
    <property type="project" value="TreeGrafter"/>
</dbReference>
<dbReference type="GO" id="GO:0008652">
    <property type="term" value="P:amino acid biosynthetic process"/>
    <property type="evidence" value="ECO:0007669"/>
    <property type="project" value="UniProtKB-KW"/>
</dbReference>
<dbReference type="GO" id="GO:0009073">
    <property type="term" value="P:aromatic amino acid family biosynthetic process"/>
    <property type="evidence" value="ECO:0007669"/>
    <property type="project" value="UniProtKB-KW"/>
</dbReference>
<dbReference type="GO" id="GO:0009423">
    <property type="term" value="P:chorismate biosynthetic process"/>
    <property type="evidence" value="ECO:0007669"/>
    <property type="project" value="UniProtKB-UniRule"/>
</dbReference>
<dbReference type="CDD" id="cd00502">
    <property type="entry name" value="DHQase_I"/>
    <property type="match status" value="1"/>
</dbReference>
<dbReference type="FunFam" id="3.20.20.70:FF:000217">
    <property type="entry name" value="3-dehydroquinate dehydratase"/>
    <property type="match status" value="1"/>
</dbReference>
<dbReference type="Gene3D" id="3.20.20.70">
    <property type="entry name" value="Aldolase class I"/>
    <property type="match status" value="1"/>
</dbReference>
<dbReference type="HAMAP" id="MF_00214">
    <property type="entry name" value="AroD"/>
    <property type="match status" value="1"/>
</dbReference>
<dbReference type="InterPro" id="IPR013785">
    <property type="entry name" value="Aldolase_TIM"/>
</dbReference>
<dbReference type="InterPro" id="IPR001381">
    <property type="entry name" value="DHquinase_I"/>
</dbReference>
<dbReference type="InterPro" id="IPR050146">
    <property type="entry name" value="Type-I_3-dehydroquinase"/>
</dbReference>
<dbReference type="NCBIfam" id="TIGR01093">
    <property type="entry name" value="aroD"/>
    <property type="match status" value="1"/>
</dbReference>
<dbReference type="PANTHER" id="PTHR43699">
    <property type="entry name" value="3-DEHYDROQUINATE DEHYDRATASE"/>
    <property type="match status" value="1"/>
</dbReference>
<dbReference type="PANTHER" id="PTHR43699:SF1">
    <property type="entry name" value="3-DEHYDROQUINATE DEHYDRATASE"/>
    <property type="match status" value="1"/>
</dbReference>
<dbReference type="Pfam" id="PF01487">
    <property type="entry name" value="DHquinase_I"/>
    <property type="match status" value="1"/>
</dbReference>
<dbReference type="SUPFAM" id="SSF51569">
    <property type="entry name" value="Aldolase"/>
    <property type="match status" value="1"/>
</dbReference>
<proteinExistence type="inferred from homology"/>
<accession>B2IQJ5</accession>
<feature type="chain" id="PRO_1000099922" description="3-dehydroquinate dehydratase">
    <location>
        <begin position="1"/>
        <end position="225"/>
    </location>
</feature>
<feature type="active site" description="Proton donor/acceptor" evidence="1">
    <location>
        <position position="118"/>
    </location>
</feature>
<feature type="active site" description="Schiff-base intermediate with substrate" evidence="1">
    <location>
        <position position="143"/>
    </location>
</feature>
<feature type="binding site" evidence="1">
    <location>
        <position position="6"/>
    </location>
    <ligand>
        <name>3-dehydroquinate</name>
        <dbReference type="ChEBI" id="CHEBI:32364"/>
    </ligand>
</feature>
<feature type="binding site" evidence="1">
    <location>
        <begin position="30"/>
        <end position="32"/>
    </location>
    <ligand>
        <name>3-dehydroquinate</name>
        <dbReference type="ChEBI" id="CHEBI:32364"/>
    </ligand>
</feature>
<feature type="binding site" evidence="1">
    <location>
        <position position="62"/>
    </location>
    <ligand>
        <name>3-dehydroquinate</name>
        <dbReference type="ChEBI" id="CHEBI:32364"/>
    </ligand>
</feature>
<feature type="binding site" evidence="1">
    <location>
        <position position="186"/>
    </location>
    <ligand>
        <name>3-dehydroquinate</name>
        <dbReference type="ChEBI" id="CHEBI:32364"/>
    </ligand>
</feature>
<feature type="binding site" evidence="1">
    <location>
        <position position="205"/>
    </location>
    <ligand>
        <name>3-dehydroquinate</name>
        <dbReference type="ChEBI" id="CHEBI:32364"/>
    </ligand>
</feature>
<feature type="binding site" evidence="1">
    <location>
        <position position="209"/>
    </location>
    <ligand>
        <name>3-dehydroquinate</name>
        <dbReference type="ChEBI" id="CHEBI:32364"/>
    </ligand>
</feature>
<organism>
    <name type="scientific">Streptococcus pneumoniae (strain CGSP14)</name>
    <dbReference type="NCBI Taxonomy" id="516950"/>
    <lineage>
        <taxon>Bacteria</taxon>
        <taxon>Bacillati</taxon>
        <taxon>Bacillota</taxon>
        <taxon>Bacilli</taxon>
        <taxon>Lactobacillales</taxon>
        <taxon>Streptococcaceae</taxon>
        <taxon>Streptococcus</taxon>
    </lineage>
</organism>
<sequence length="225" mass="25719">MKLIVSVMPRSLEEAQALDATRYLDADIIEWRADYLPKEAILQVAPAIFEKFAGRELVFTLRTRSEGGEIDLSPEEYIHLIKEVAQLYQPDYIDFEYYSYKDVFEEMLDFPNLVLSYHNFQETPENMMEILSELTILNPKLVKVAVMAHTEQDVLDLMNYTRGFKTLNPEQEYVTISMGKVGKVSRITADVTGSSWSFASLDEVSAPGQISLASMKKIREILDEA</sequence>
<gene>
    <name evidence="1" type="primary">aroD</name>
    <name type="ordered locus">SPCG_1367</name>
</gene>
<reference key="1">
    <citation type="journal article" date="2009" name="BMC Genomics">
        <title>Genome evolution driven by host adaptations results in a more virulent and antimicrobial-resistant Streptococcus pneumoniae serotype 14.</title>
        <authorList>
            <person name="Ding F."/>
            <person name="Tang P."/>
            <person name="Hsu M.-H."/>
            <person name="Cui P."/>
            <person name="Hu S."/>
            <person name="Yu J."/>
            <person name="Chiu C.-H."/>
        </authorList>
    </citation>
    <scope>NUCLEOTIDE SEQUENCE [LARGE SCALE GENOMIC DNA]</scope>
    <source>
        <strain>CGSP14</strain>
    </source>
</reference>
<comment type="function">
    <text evidence="1">Involved in the third step of the chorismate pathway, which leads to the biosynthesis of aromatic amino acids. Catalyzes the cis-dehydration of 3-dehydroquinate (DHQ) and introduces the first double bond of the aromatic ring to yield 3-dehydroshikimate.</text>
</comment>
<comment type="catalytic activity">
    <reaction evidence="1">
        <text>3-dehydroquinate = 3-dehydroshikimate + H2O</text>
        <dbReference type="Rhea" id="RHEA:21096"/>
        <dbReference type="ChEBI" id="CHEBI:15377"/>
        <dbReference type="ChEBI" id="CHEBI:16630"/>
        <dbReference type="ChEBI" id="CHEBI:32364"/>
        <dbReference type="EC" id="4.2.1.10"/>
    </reaction>
</comment>
<comment type="pathway">
    <text evidence="1">Metabolic intermediate biosynthesis; chorismate biosynthesis; chorismate from D-erythrose 4-phosphate and phosphoenolpyruvate: step 3/7.</text>
</comment>
<comment type="subunit">
    <text evidence="1">Homodimer.</text>
</comment>
<comment type="similarity">
    <text evidence="1">Belongs to the type-I 3-dehydroquinase family.</text>
</comment>
<name>AROD_STRPS</name>
<protein>
    <recommendedName>
        <fullName evidence="1">3-dehydroquinate dehydratase</fullName>
        <shortName evidence="1">3-dehydroquinase</shortName>
        <ecNumber evidence="1">4.2.1.10</ecNumber>
    </recommendedName>
    <alternativeName>
        <fullName evidence="1">Type I DHQase</fullName>
    </alternativeName>
    <alternativeName>
        <fullName evidence="1">Type I dehydroquinase</fullName>
        <shortName evidence="1">DHQ1</shortName>
    </alternativeName>
</protein>
<keyword id="KW-0028">Amino-acid biosynthesis</keyword>
<keyword id="KW-0057">Aromatic amino acid biosynthesis</keyword>
<keyword id="KW-0456">Lyase</keyword>
<keyword id="KW-0704">Schiff base</keyword>